<accession>Q62GE5</accession>
<dbReference type="EC" id="4.3.2.10" evidence="1"/>
<dbReference type="EMBL" id="CP000010">
    <property type="protein sequence ID" value="AAU48276.1"/>
    <property type="molecule type" value="Genomic_DNA"/>
</dbReference>
<dbReference type="RefSeq" id="WP_011204150.1">
    <property type="nucleotide sequence ID" value="NC_006348.1"/>
</dbReference>
<dbReference type="RefSeq" id="YP_104229.1">
    <property type="nucleotide sequence ID" value="NC_006348.1"/>
</dbReference>
<dbReference type="SMR" id="Q62GE5"/>
<dbReference type="GeneID" id="92980390"/>
<dbReference type="KEGG" id="bma:BMA2708"/>
<dbReference type="PATRIC" id="fig|243160.12.peg.2778"/>
<dbReference type="eggNOG" id="COG0107">
    <property type="taxonomic scope" value="Bacteria"/>
</dbReference>
<dbReference type="HOGENOM" id="CLU_048577_4_0_4"/>
<dbReference type="UniPathway" id="UPA00031">
    <property type="reaction ID" value="UER00010"/>
</dbReference>
<dbReference type="Proteomes" id="UP000006693">
    <property type="component" value="Chromosome 1"/>
</dbReference>
<dbReference type="GO" id="GO:0005737">
    <property type="term" value="C:cytoplasm"/>
    <property type="evidence" value="ECO:0007669"/>
    <property type="project" value="UniProtKB-SubCell"/>
</dbReference>
<dbReference type="GO" id="GO:0000107">
    <property type="term" value="F:imidazoleglycerol-phosphate synthase activity"/>
    <property type="evidence" value="ECO:0007669"/>
    <property type="project" value="UniProtKB-UniRule"/>
</dbReference>
<dbReference type="GO" id="GO:0016829">
    <property type="term" value="F:lyase activity"/>
    <property type="evidence" value="ECO:0007669"/>
    <property type="project" value="UniProtKB-KW"/>
</dbReference>
<dbReference type="GO" id="GO:0000105">
    <property type="term" value="P:L-histidine biosynthetic process"/>
    <property type="evidence" value="ECO:0007669"/>
    <property type="project" value="UniProtKB-UniRule"/>
</dbReference>
<dbReference type="CDD" id="cd04731">
    <property type="entry name" value="HisF"/>
    <property type="match status" value="1"/>
</dbReference>
<dbReference type="FunFam" id="3.20.20.70:FF:000006">
    <property type="entry name" value="Imidazole glycerol phosphate synthase subunit HisF"/>
    <property type="match status" value="1"/>
</dbReference>
<dbReference type="Gene3D" id="3.20.20.70">
    <property type="entry name" value="Aldolase class I"/>
    <property type="match status" value="1"/>
</dbReference>
<dbReference type="HAMAP" id="MF_01013">
    <property type="entry name" value="HisF"/>
    <property type="match status" value="1"/>
</dbReference>
<dbReference type="InterPro" id="IPR013785">
    <property type="entry name" value="Aldolase_TIM"/>
</dbReference>
<dbReference type="InterPro" id="IPR006062">
    <property type="entry name" value="His_biosynth"/>
</dbReference>
<dbReference type="InterPro" id="IPR004651">
    <property type="entry name" value="HisF"/>
</dbReference>
<dbReference type="InterPro" id="IPR050064">
    <property type="entry name" value="IGPS_HisA/HisF"/>
</dbReference>
<dbReference type="InterPro" id="IPR011060">
    <property type="entry name" value="RibuloseP-bd_barrel"/>
</dbReference>
<dbReference type="NCBIfam" id="TIGR00735">
    <property type="entry name" value="hisF"/>
    <property type="match status" value="1"/>
</dbReference>
<dbReference type="PANTHER" id="PTHR21235:SF2">
    <property type="entry name" value="IMIDAZOLE GLYCEROL PHOSPHATE SYNTHASE HISHF"/>
    <property type="match status" value="1"/>
</dbReference>
<dbReference type="PANTHER" id="PTHR21235">
    <property type="entry name" value="IMIDAZOLE GLYCEROL PHOSPHATE SYNTHASE SUBUNIT HISF/H IGP SYNTHASE SUBUNIT HISF/H"/>
    <property type="match status" value="1"/>
</dbReference>
<dbReference type="Pfam" id="PF00977">
    <property type="entry name" value="His_biosynth"/>
    <property type="match status" value="1"/>
</dbReference>
<dbReference type="SUPFAM" id="SSF51366">
    <property type="entry name" value="Ribulose-phoshate binding barrel"/>
    <property type="match status" value="1"/>
</dbReference>
<protein>
    <recommendedName>
        <fullName evidence="1">Imidazole glycerol phosphate synthase subunit HisF</fullName>
        <ecNumber evidence="1">4.3.2.10</ecNumber>
    </recommendedName>
    <alternativeName>
        <fullName evidence="1">IGP synthase cyclase subunit</fullName>
    </alternativeName>
    <alternativeName>
        <fullName evidence="1">IGP synthase subunit HisF</fullName>
    </alternativeName>
    <alternativeName>
        <fullName evidence="1">ImGP synthase subunit HisF</fullName>
        <shortName evidence="1">IGPS subunit HisF</shortName>
    </alternativeName>
</protein>
<organism>
    <name type="scientific">Burkholderia mallei (strain ATCC 23344)</name>
    <dbReference type="NCBI Taxonomy" id="243160"/>
    <lineage>
        <taxon>Bacteria</taxon>
        <taxon>Pseudomonadati</taxon>
        <taxon>Pseudomonadota</taxon>
        <taxon>Betaproteobacteria</taxon>
        <taxon>Burkholderiales</taxon>
        <taxon>Burkholderiaceae</taxon>
        <taxon>Burkholderia</taxon>
        <taxon>pseudomallei group</taxon>
    </lineage>
</organism>
<feature type="chain" id="PRO_0000142135" description="Imidazole glycerol phosphate synthase subunit HisF">
    <location>
        <begin position="1"/>
        <end position="257"/>
    </location>
</feature>
<feature type="active site" evidence="1">
    <location>
        <position position="12"/>
    </location>
</feature>
<feature type="active site" evidence="1">
    <location>
        <position position="131"/>
    </location>
</feature>
<sequence>MALAKRIIPCFDVTAGRVVKGVNFVELRDAGDPVEIARRYDAQGADELTFLDITATSDGRDLILPIIEAVASQVFIPLTVGGGVRAVEDVRRLLNAGADKVSMNSSAVANPPLVRDAADKYGSQCIVVAIDAKRVSADGEPPRWEVFTHGGRKGTGLDAVEWARKMAELGAGEILLTSMDRDGTKAGFDLALTRAVSDAVPVPVIASGGVGSLEHLAAGITEGHADAVLAASIFHYGEHTVGEAKRFMAERGIAVRL</sequence>
<reference key="1">
    <citation type="journal article" date="2004" name="Proc. Natl. Acad. Sci. U.S.A.">
        <title>Structural flexibility in the Burkholderia mallei genome.</title>
        <authorList>
            <person name="Nierman W.C."/>
            <person name="DeShazer D."/>
            <person name="Kim H.S."/>
            <person name="Tettelin H."/>
            <person name="Nelson K.E."/>
            <person name="Feldblyum T.V."/>
            <person name="Ulrich R.L."/>
            <person name="Ronning C.M."/>
            <person name="Brinkac L.M."/>
            <person name="Daugherty S.C."/>
            <person name="Davidsen T.D."/>
            <person name="DeBoy R.T."/>
            <person name="Dimitrov G."/>
            <person name="Dodson R.J."/>
            <person name="Durkin A.S."/>
            <person name="Gwinn M.L."/>
            <person name="Haft D.H."/>
            <person name="Khouri H.M."/>
            <person name="Kolonay J.F."/>
            <person name="Madupu R."/>
            <person name="Mohammoud Y."/>
            <person name="Nelson W.C."/>
            <person name="Radune D."/>
            <person name="Romero C.M."/>
            <person name="Sarria S."/>
            <person name="Selengut J."/>
            <person name="Shamblin C."/>
            <person name="Sullivan S.A."/>
            <person name="White O."/>
            <person name="Yu Y."/>
            <person name="Zafar N."/>
            <person name="Zhou L."/>
            <person name="Fraser C.M."/>
        </authorList>
    </citation>
    <scope>NUCLEOTIDE SEQUENCE [LARGE SCALE GENOMIC DNA]</scope>
    <source>
        <strain>ATCC 23344</strain>
    </source>
</reference>
<name>HIS6_BURMA</name>
<proteinExistence type="inferred from homology"/>
<evidence type="ECO:0000255" key="1">
    <source>
        <dbReference type="HAMAP-Rule" id="MF_01013"/>
    </source>
</evidence>
<comment type="function">
    <text evidence="1">IGPS catalyzes the conversion of PRFAR and glutamine to IGP, AICAR and glutamate. The HisF subunit catalyzes the cyclization activity that produces IGP and AICAR from PRFAR using the ammonia provided by the HisH subunit.</text>
</comment>
<comment type="catalytic activity">
    <reaction evidence="1">
        <text>5-[(5-phospho-1-deoxy-D-ribulos-1-ylimino)methylamino]-1-(5-phospho-beta-D-ribosyl)imidazole-4-carboxamide + L-glutamine = D-erythro-1-(imidazol-4-yl)glycerol 3-phosphate + 5-amino-1-(5-phospho-beta-D-ribosyl)imidazole-4-carboxamide + L-glutamate + H(+)</text>
        <dbReference type="Rhea" id="RHEA:24793"/>
        <dbReference type="ChEBI" id="CHEBI:15378"/>
        <dbReference type="ChEBI" id="CHEBI:29985"/>
        <dbReference type="ChEBI" id="CHEBI:58278"/>
        <dbReference type="ChEBI" id="CHEBI:58359"/>
        <dbReference type="ChEBI" id="CHEBI:58475"/>
        <dbReference type="ChEBI" id="CHEBI:58525"/>
        <dbReference type="EC" id="4.3.2.10"/>
    </reaction>
</comment>
<comment type="pathway">
    <text evidence="1">Amino-acid biosynthesis; L-histidine biosynthesis; L-histidine from 5-phospho-alpha-D-ribose 1-diphosphate: step 5/9.</text>
</comment>
<comment type="subunit">
    <text evidence="1">Heterodimer of HisH and HisF.</text>
</comment>
<comment type="subcellular location">
    <subcellularLocation>
        <location evidence="1">Cytoplasm</location>
    </subcellularLocation>
</comment>
<comment type="similarity">
    <text evidence="1">Belongs to the HisA/HisF family.</text>
</comment>
<keyword id="KW-0028">Amino-acid biosynthesis</keyword>
<keyword id="KW-0963">Cytoplasm</keyword>
<keyword id="KW-0368">Histidine biosynthesis</keyword>
<keyword id="KW-0456">Lyase</keyword>
<keyword id="KW-1185">Reference proteome</keyword>
<gene>
    <name evidence="1" type="primary">hisF</name>
    <name type="ordered locus">BMA2708</name>
</gene>